<evidence type="ECO:0000305" key="1"/>
<dbReference type="EMBL" id="L25760">
    <property type="protein sequence ID" value="AAA50825.1"/>
    <property type="molecule type" value="Genomic_DNA"/>
</dbReference>
<dbReference type="EMBL" id="BA000040">
    <property type="protein sequence ID" value="BAC52199.1"/>
    <property type="molecule type" value="Genomic_DNA"/>
</dbReference>
<dbReference type="RefSeq" id="NP_773574.1">
    <property type="nucleotide sequence ID" value="NC_004463.1"/>
</dbReference>
<dbReference type="RefSeq" id="WP_011089672.1">
    <property type="nucleotide sequence ID" value="NC_004463.1"/>
</dbReference>
<dbReference type="SMR" id="P48341"/>
<dbReference type="FunCoup" id="P48341">
    <property type="interactions" value="50"/>
</dbReference>
<dbReference type="STRING" id="224911.AAV28_32260"/>
<dbReference type="EnsemblBacteria" id="BAC52199">
    <property type="protein sequence ID" value="BAC52199"/>
    <property type="gene ID" value="BAC52199"/>
</dbReference>
<dbReference type="GeneID" id="46493900"/>
<dbReference type="KEGG" id="bja:bll6934"/>
<dbReference type="PATRIC" id="fig|224911.44.peg.6968"/>
<dbReference type="eggNOG" id="COG1773">
    <property type="taxonomic scope" value="Bacteria"/>
</dbReference>
<dbReference type="HOGENOM" id="CLU_091699_1_0_5"/>
<dbReference type="InParanoid" id="P48341"/>
<dbReference type="OrthoDB" id="9808980at2"/>
<dbReference type="PhylomeDB" id="P48341"/>
<dbReference type="Proteomes" id="UP000002526">
    <property type="component" value="Chromosome"/>
</dbReference>
<dbReference type="Gene3D" id="3.30.1460.40">
    <property type="entry name" value="[NiFe]-hydrogenase assembly chaperone, HybE"/>
    <property type="match status" value="1"/>
</dbReference>
<dbReference type="InterPro" id="IPR023994">
    <property type="entry name" value="NiFe-hyd_HybE"/>
</dbReference>
<dbReference type="InterPro" id="IPR038530">
    <property type="entry name" value="NiFe-hyd_HybE_sf"/>
</dbReference>
<dbReference type="NCBIfam" id="TIGR03993">
    <property type="entry name" value="hydrog_HybE"/>
    <property type="match status" value="1"/>
</dbReference>
<dbReference type="Pfam" id="PF11939">
    <property type="entry name" value="NiFe-hyd_HybE"/>
    <property type="match status" value="1"/>
</dbReference>
<name>HUPJ_BRADU</name>
<feature type="chain" id="PRO_0000201424" description="Hydrogenase expression/formation protein HupJ">
    <location>
        <begin position="1"/>
        <end position="169"/>
    </location>
</feature>
<organism>
    <name type="scientific">Bradyrhizobium diazoefficiens (strain JCM 10833 / BCRC 13528 / IAM 13628 / NBRC 14792 / USDA 110)</name>
    <dbReference type="NCBI Taxonomy" id="224911"/>
    <lineage>
        <taxon>Bacteria</taxon>
        <taxon>Pseudomonadati</taxon>
        <taxon>Pseudomonadota</taxon>
        <taxon>Alphaproteobacteria</taxon>
        <taxon>Hyphomicrobiales</taxon>
        <taxon>Nitrobacteraceae</taxon>
        <taxon>Bradyrhizobium</taxon>
    </lineage>
</organism>
<protein>
    <recommendedName>
        <fullName>Hydrogenase expression/formation protein HupJ</fullName>
    </recommendedName>
</protein>
<proteinExistence type="inferred from homology"/>
<keyword id="KW-1185">Reference proteome</keyword>
<sequence length="169" mass="18112">MTGSAPNPDADAVAWGDLLAGSYREIGERAMRDLPIYNDALGVEAVGFRAFNGTIVGIMVTPWFMNVVLPASAVAQATSGATARIRFPAGDIEFTISEVGQIGRIASCSLFSPMFQFADMDAARATAEAALAELMLPADSEEAVRRREPATTPIDRRNFLRGTLTERRG</sequence>
<reference key="1">
    <citation type="journal article" date="1994" name="Gene">
        <title>Organization of the hydrogenase gene cluster from Bradyrhizobium japonicum: sequences and analysis of five more hydrogenase-related genes.</title>
        <authorList>
            <person name="Fu C."/>
            <person name="Maier R.J."/>
        </authorList>
    </citation>
    <scope>NUCLEOTIDE SEQUENCE [GENOMIC DNA]</scope>
    <source>
        <strain>JCM 10833 / BCRC 13528 / IAM 13628 / NBRC 14792 / USDA 110</strain>
    </source>
</reference>
<reference key="2">
    <citation type="journal article" date="2002" name="DNA Res.">
        <title>Complete genomic sequence of nitrogen-fixing symbiotic bacterium Bradyrhizobium japonicum USDA110.</title>
        <authorList>
            <person name="Kaneko T."/>
            <person name="Nakamura Y."/>
            <person name="Sato S."/>
            <person name="Minamisawa K."/>
            <person name="Uchiumi T."/>
            <person name="Sasamoto S."/>
            <person name="Watanabe A."/>
            <person name="Idesawa K."/>
            <person name="Iriguchi M."/>
            <person name="Kawashima K."/>
            <person name="Kohara M."/>
            <person name="Matsumoto M."/>
            <person name="Shimpo S."/>
            <person name="Tsuruoka H."/>
            <person name="Wada T."/>
            <person name="Yamada M."/>
            <person name="Tabata S."/>
        </authorList>
    </citation>
    <scope>NUCLEOTIDE SEQUENCE [LARGE SCALE GENOMIC DNA]</scope>
    <source>
        <strain>JCM 10833 / BCRC 13528 / IAM 13628 / NBRC 14792 / USDA 110</strain>
    </source>
</reference>
<accession>P48341</accession>
<comment type="similarity">
    <text evidence="1">Belongs to the HupJ family.</text>
</comment>
<gene>
    <name type="primary">hupJ</name>
    <name type="ordered locus">bll6934</name>
</gene>